<gene>
    <name evidence="1" type="primary">ureC</name>
    <name type="synonym">yeuC</name>
</gene>
<organism>
    <name type="scientific">Yersinia enterocolitica</name>
    <dbReference type="NCBI Taxonomy" id="630"/>
    <lineage>
        <taxon>Bacteria</taxon>
        <taxon>Pseudomonadati</taxon>
        <taxon>Pseudomonadota</taxon>
        <taxon>Gammaproteobacteria</taxon>
        <taxon>Enterobacterales</taxon>
        <taxon>Yersiniaceae</taxon>
        <taxon>Yersinia</taxon>
    </lineage>
</organism>
<comment type="function">
    <text evidence="2">Expression of the urease operon increases the likelihood of bacterial survival by contributing to acid resistance in vitro and in vivo in BALB/c mice. Y.enterocolitica enters the body via an oral path and must survive the acidic stomach before being able to colonize the intestinal mucosa (PubMed:7558281).</text>
</comment>
<comment type="catalytic activity">
    <reaction evidence="1">
        <text>urea + 2 H2O + H(+) = hydrogencarbonate + 2 NH4(+)</text>
        <dbReference type="Rhea" id="RHEA:20557"/>
        <dbReference type="ChEBI" id="CHEBI:15377"/>
        <dbReference type="ChEBI" id="CHEBI:15378"/>
        <dbReference type="ChEBI" id="CHEBI:16199"/>
        <dbReference type="ChEBI" id="CHEBI:17544"/>
        <dbReference type="ChEBI" id="CHEBI:28938"/>
        <dbReference type="EC" id="3.5.1.5"/>
    </reaction>
</comment>
<comment type="cofactor">
    <cofactor evidence="1">
        <name>Ni cation</name>
        <dbReference type="ChEBI" id="CHEBI:25516"/>
    </cofactor>
    <text evidence="1">Binds 2 nickel ions per subunit.</text>
</comment>
<comment type="pathway">
    <text evidence="1">Nitrogen metabolism; urea degradation; CO(2) and NH(3) from urea (urease route): step 1/1.</text>
</comment>
<comment type="subunit">
    <text evidence="1">Heterotrimer of UreA (gamma), UreB (beta) and UreC (alpha) subunits. Three heterotrimers associate to form the active enzyme.</text>
</comment>
<comment type="subcellular location">
    <subcellularLocation>
        <location evidence="1">Cytoplasm</location>
    </subcellularLocation>
</comment>
<comment type="PTM">
    <text evidence="1">Carboxylation allows a single lysine to coordinate two nickel ions.</text>
</comment>
<comment type="similarity">
    <text evidence="1">Belongs to the metallo-dependent hydrolases superfamily. Urease alpha subunit family.</text>
</comment>
<feature type="chain" id="PRO_0000067565" description="Urease subunit alpha">
    <location>
        <begin position="1"/>
        <end position="572"/>
    </location>
</feature>
<feature type="domain" description="Urease" evidence="1">
    <location>
        <begin position="134"/>
        <end position="572"/>
    </location>
</feature>
<feature type="active site" description="Proton donor" evidence="1">
    <location>
        <position position="325"/>
    </location>
</feature>
<feature type="binding site" evidence="1">
    <location>
        <position position="139"/>
    </location>
    <ligand>
        <name>Ni(2+)</name>
        <dbReference type="ChEBI" id="CHEBI:49786"/>
        <label>1</label>
    </ligand>
</feature>
<feature type="binding site" evidence="1">
    <location>
        <position position="141"/>
    </location>
    <ligand>
        <name>Ni(2+)</name>
        <dbReference type="ChEBI" id="CHEBI:49786"/>
        <label>1</label>
    </ligand>
</feature>
<feature type="binding site" description="via carbamate group" evidence="1">
    <location>
        <position position="222"/>
    </location>
    <ligand>
        <name>Ni(2+)</name>
        <dbReference type="ChEBI" id="CHEBI:49786"/>
        <label>1</label>
    </ligand>
</feature>
<feature type="binding site" description="via carbamate group" evidence="1">
    <location>
        <position position="222"/>
    </location>
    <ligand>
        <name>Ni(2+)</name>
        <dbReference type="ChEBI" id="CHEBI:49786"/>
        <label>2</label>
    </ligand>
</feature>
<feature type="binding site" evidence="1">
    <location>
        <position position="224"/>
    </location>
    <ligand>
        <name>substrate</name>
    </ligand>
</feature>
<feature type="binding site" evidence="1">
    <location>
        <position position="251"/>
    </location>
    <ligand>
        <name>Ni(2+)</name>
        <dbReference type="ChEBI" id="CHEBI:49786"/>
        <label>2</label>
    </ligand>
</feature>
<feature type="binding site" evidence="1">
    <location>
        <position position="277"/>
    </location>
    <ligand>
        <name>Ni(2+)</name>
        <dbReference type="ChEBI" id="CHEBI:49786"/>
        <label>2</label>
    </ligand>
</feature>
<feature type="binding site" evidence="1">
    <location>
        <position position="365"/>
    </location>
    <ligand>
        <name>Ni(2+)</name>
        <dbReference type="ChEBI" id="CHEBI:49786"/>
        <label>1</label>
    </ligand>
</feature>
<feature type="modified residue" description="N6-carboxylysine" evidence="1">
    <location>
        <position position="222"/>
    </location>
</feature>
<feature type="sequence conflict" description="In Ref. 1; CAA79316." evidence="3" ref="1">
    <original>IE</original>
    <variation>MQ</variation>
    <location>
        <begin position="30"/>
        <end position="31"/>
    </location>
</feature>
<feature type="sequence conflict" description="In Ref. 1." evidence="3" ref="1">
    <original>V</original>
    <variation>GY</variation>
    <location>
        <position position="67"/>
    </location>
</feature>
<feature type="sequence conflict" description="In Ref. 1." evidence="3" ref="1">
    <original>DLVITNVTIVDARLG</original>
    <variation>EFSHNQRHYCCSPFR</variation>
    <location>
        <begin position="69"/>
        <end position="83"/>
    </location>
</feature>
<feature type="sequence conflict" description="In Ref. 1; CAA79316." evidence="3" ref="1">
    <original>A</original>
    <variation>V</variation>
    <location>
        <position position="97"/>
    </location>
</feature>
<feature type="sequence conflict" description="In Ref. 1; CAA79316." evidence="3" ref="1">
    <original>M</original>
    <variation>L</variation>
    <location>
        <position position="115"/>
    </location>
</feature>
<feature type="sequence conflict" description="In Ref. 1; CAA79316." evidence="3" ref="1">
    <original>S</original>
    <variation>T</variation>
    <location>
        <position position="138"/>
    </location>
</feature>
<feature type="sequence conflict" description="In Ref. 1; CAA79316." evidence="3" ref="1">
    <original>L</original>
    <variation>V</variation>
    <location>
        <position position="406"/>
    </location>
</feature>
<feature type="sequence conflict" description="In Ref. 1; CAA79316." evidence="3" ref="1">
    <original>D</original>
    <variation>V</variation>
    <location>
        <position position="441"/>
    </location>
</feature>
<proteinExistence type="inferred from homology"/>
<keyword id="KW-0963">Cytoplasm</keyword>
<keyword id="KW-0378">Hydrolase</keyword>
<keyword id="KW-0479">Metal-binding</keyword>
<keyword id="KW-0533">Nickel</keyword>
<keyword id="KW-0843">Virulence</keyword>
<name>URE1_YEREN</name>
<protein>
    <recommendedName>
        <fullName evidence="1">Urease subunit alpha</fullName>
        <ecNumber evidence="1">3.5.1.5</ecNumber>
    </recommendedName>
    <alternativeName>
        <fullName evidence="1">Urea amidohydrolase subunit alpha</fullName>
    </alternativeName>
</protein>
<reference key="1">
    <citation type="journal article" date="1993" name="Infect. Immun.">
        <title>The putative arthritogenic cationic 19-kilodalton antigen of Yersinia enterocolitica is a urease beta-subunit.</title>
        <authorList>
            <person name="Skurnik M."/>
            <person name="Batsford S."/>
            <person name="Mertz A.K.H."/>
            <person name="Schiltz E."/>
            <person name="Toivanen P."/>
        </authorList>
    </citation>
    <scope>NUCLEOTIDE SEQUENCE [GENOMIC DNA]</scope>
    <source>
        <strain>6471/76 / Serotype O:3</strain>
    </source>
</reference>
<reference key="2">
    <citation type="journal article" date="1995" name="Infect. Immun.">
        <title>Contribution of urease to acid tolerance in Yersinia enterocolitica.</title>
        <authorList>
            <person name="de Koning-Ward T.F."/>
            <person name="Robins-Browne R.M."/>
        </authorList>
    </citation>
    <scope>ROLE IN VIRULENCE</scope>
    <source>
        <strain>W22703 / Serogroup O:9</strain>
    </source>
</reference>
<reference key="3">
    <citation type="journal article" date="1994" name="Gene">
        <title>Characterisation of the urease-encoding gene complex of Yersinia enterocolitica.</title>
        <authorList>
            <person name="de Koning-Ward T.F."/>
            <person name="Ward A.C."/>
            <person name="Robins-Browne R.M."/>
        </authorList>
    </citation>
    <scope>NUCLEOTIDE SEQUENCE [GENOMIC DNA]</scope>
    <source>
        <strain>A2635 / Serotype O:8</strain>
    </source>
</reference>
<evidence type="ECO:0000255" key="1">
    <source>
        <dbReference type="HAMAP-Rule" id="MF_01953"/>
    </source>
</evidence>
<evidence type="ECO:0000269" key="2">
    <source>
    </source>
</evidence>
<evidence type="ECO:0000305" key="3"/>
<accession>P31494</accession>
<dbReference type="EC" id="3.5.1.5" evidence="1"/>
<dbReference type="EMBL" id="Z18865">
    <property type="protein sequence ID" value="CAA79316.1"/>
    <property type="molecule type" value="Genomic_DNA"/>
</dbReference>
<dbReference type="EMBL" id="L24101">
    <property type="protein sequence ID" value="AAA50996.1"/>
    <property type="molecule type" value="Genomic_DNA"/>
</dbReference>
<dbReference type="PIR" id="S36028">
    <property type="entry name" value="S36028"/>
</dbReference>
<dbReference type="RefSeq" id="WP_011815716.1">
    <property type="nucleotide sequence ID" value="NZ_NWMR01000089.1"/>
</dbReference>
<dbReference type="SMR" id="P31494"/>
<dbReference type="MEROPS" id="M38.982"/>
<dbReference type="PATRIC" id="fig|630.32.peg.1788"/>
<dbReference type="UniPathway" id="UPA00258">
    <property type="reaction ID" value="UER00370"/>
</dbReference>
<dbReference type="GO" id="GO:0005737">
    <property type="term" value="C:cytoplasm"/>
    <property type="evidence" value="ECO:0007669"/>
    <property type="project" value="UniProtKB-SubCell"/>
</dbReference>
<dbReference type="GO" id="GO:0016151">
    <property type="term" value="F:nickel cation binding"/>
    <property type="evidence" value="ECO:0007669"/>
    <property type="project" value="UniProtKB-UniRule"/>
</dbReference>
<dbReference type="GO" id="GO:0009039">
    <property type="term" value="F:urease activity"/>
    <property type="evidence" value="ECO:0007669"/>
    <property type="project" value="UniProtKB-UniRule"/>
</dbReference>
<dbReference type="GO" id="GO:0043419">
    <property type="term" value="P:urea catabolic process"/>
    <property type="evidence" value="ECO:0007669"/>
    <property type="project" value="UniProtKB-UniRule"/>
</dbReference>
<dbReference type="CDD" id="cd00375">
    <property type="entry name" value="Urease_alpha"/>
    <property type="match status" value="1"/>
</dbReference>
<dbReference type="Gene3D" id="3.20.20.140">
    <property type="entry name" value="Metal-dependent hydrolases"/>
    <property type="match status" value="1"/>
</dbReference>
<dbReference type="Gene3D" id="2.30.40.10">
    <property type="entry name" value="Urease, subunit C, domain 1"/>
    <property type="match status" value="1"/>
</dbReference>
<dbReference type="HAMAP" id="MF_01953">
    <property type="entry name" value="Urease_alpha"/>
    <property type="match status" value="1"/>
</dbReference>
<dbReference type="InterPro" id="IPR006680">
    <property type="entry name" value="Amidohydro-rel"/>
</dbReference>
<dbReference type="InterPro" id="IPR011059">
    <property type="entry name" value="Metal-dep_hydrolase_composite"/>
</dbReference>
<dbReference type="InterPro" id="IPR032466">
    <property type="entry name" value="Metal_Hydrolase"/>
</dbReference>
<dbReference type="InterPro" id="IPR011612">
    <property type="entry name" value="Urease_alpha_N_dom"/>
</dbReference>
<dbReference type="InterPro" id="IPR050112">
    <property type="entry name" value="Urease_alpha_subunit"/>
</dbReference>
<dbReference type="InterPro" id="IPR017950">
    <property type="entry name" value="Urease_AS"/>
</dbReference>
<dbReference type="InterPro" id="IPR005848">
    <property type="entry name" value="Urease_asu"/>
</dbReference>
<dbReference type="InterPro" id="IPR017951">
    <property type="entry name" value="Urease_asu_c"/>
</dbReference>
<dbReference type="InterPro" id="IPR029754">
    <property type="entry name" value="Urease_Ni-bd"/>
</dbReference>
<dbReference type="NCBIfam" id="NF009686">
    <property type="entry name" value="PRK13207.1"/>
    <property type="match status" value="1"/>
</dbReference>
<dbReference type="NCBIfam" id="NF009834">
    <property type="entry name" value="PRK13309.1"/>
    <property type="match status" value="1"/>
</dbReference>
<dbReference type="NCBIfam" id="TIGR01792">
    <property type="entry name" value="urease_alph"/>
    <property type="match status" value="1"/>
</dbReference>
<dbReference type="PANTHER" id="PTHR43440">
    <property type="entry name" value="UREASE"/>
    <property type="match status" value="1"/>
</dbReference>
<dbReference type="PANTHER" id="PTHR43440:SF1">
    <property type="entry name" value="UREASE"/>
    <property type="match status" value="1"/>
</dbReference>
<dbReference type="Pfam" id="PF01979">
    <property type="entry name" value="Amidohydro_1"/>
    <property type="match status" value="1"/>
</dbReference>
<dbReference type="Pfam" id="PF00449">
    <property type="entry name" value="Urease_alpha"/>
    <property type="match status" value="1"/>
</dbReference>
<dbReference type="PRINTS" id="PR01752">
    <property type="entry name" value="UREASE"/>
</dbReference>
<dbReference type="SUPFAM" id="SSF51338">
    <property type="entry name" value="Composite domain of metallo-dependent hydrolases"/>
    <property type="match status" value="2"/>
</dbReference>
<dbReference type="SUPFAM" id="SSF51556">
    <property type="entry name" value="Metallo-dependent hydrolases"/>
    <property type="match status" value="1"/>
</dbReference>
<dbReference type="PROSITE" id="PS01120">
    <property type="entry name" value="UREASE_1"/>
    <property type="match status" value="1"/>
</dbReference>
<dbReference type="PROSITE" id="PS00145">
    <property type="entry name" value="UREASE_2"/>
    <property type="match status" value="1"/>
</dbReference>
<dbReference type="PROSITE" id="PS51368">
    <property type="entry name" value="UREASE_3"/>
    <property type="match status" value="1"/>
</dbReference>
<sequence length="572" mass="61083">MPQISRQEYAGLFGPTTGDKIRLGDTNLFIEIEKDLRGYGEESVYGGGKSLRDGMGANNHLTRDNGVLDLVITNVTIVDARLGVIKADVGIRDGKIAGIGKSGNPGVMDGVTPGMVVGVSTDAISGEHLILTAAGIDSHIHLISPQQAYHALSNGVATFFGGGIGPTDGTNGTTVTPGPWNIRQMLRSVEGLPVNVGILGKGNSYGRGPLLEQAIAGVVGYKVHEDWGATANALRHSLRMADEMDIQVSVHTDSLNECGYVEDTIDAFEGRTIHTFHTEGAGGGHAPDIIRVASQPNVLPSSTNPTLPYGVNSQAELFDMIMVCHNLNPNVPADVSFAESRVRPETIAAENVLHDMGVISMFSSDSQAMGRVGENWLRVMQTANAMKASRGKLPEDAPGNDNFRVLRYVAKITINPAIAQGVSHVIGSVEVGKMADLVLWDPRFFGAKPKMVIKGGMINWAAMGDPNASLPTPQPVFYRPMFGAMGKTMQDTCVTFVSQAALDDGVKEKAGLDRQVIAVKNCRTISKHDLVRNDQTPNIEVDPETFAVKVDGVHATCEPIDTAAMNQRYFFG</sequence>